<feature type="chain" id="PRO_0000219964" description="PqqA binding protein">
    <location>
        <begin position="1"/>
        <end position="93"/>
    </location>
</feature>
<proteinExistence type="inferred from homology"/>
<reference key="1">
    <citation type="journal article" date="2004" name="PLoS Biol.">
        <title>Genomic insights into methanotrophy: the complete genome sequence of Methylococcus capsulatus (Bath).</title>
        <authorList>
            <person name="Ward N.L."/>
            <person name="Larsen O."/>
            <person name="Sakwa J."/>
            <person name="Bruseth L."/>
            <person name="Khouri H.M."/>
            <person name="Durkin A.S."/>
            <person name="Dimitrov G."/>
            <person name="Jiang L."/>
            <person name="Scanlan D."/>
            <person name="Kang K.H."/>
            <person name="Lewis M.R."/>
            <person name="Nelson K.E."/>
            <person name="Methe B.A."/>
            <person name="Wu M."/>
            <person name="Heidelberg J.F."/>
            <person name="Paulsen I.T."/>
            <person name="Fouts D.E."/>
            <person name="Ravel J."/>
            <person name="Tettelin H."/>
            <person name="Ren Q."/>
            <person name="Read T.D."/>
            <person name="DeBoy R.T."/>
            <person name="Seshadri R."/>
            <person name="Salzberg S.L."/>
            <person name="Jensen H.B."/>
            <person name="Birkeland N.K."/>
            <person name="Nelson W.C."/>
            <person name="Dodson R.J."/>
            <person name="Grindhaug S.H."/>
            <person name="Holt I.E."/>
            <person name="Eidhammer I."/>
            <person name="Jonasen I."/>
            <person name="Vanaken S."/>
            <person name="Utterback T.R."/>
            <person name="Feldblyum T.V."/>
            <person name="Fraser C.M."/>
            <person name="Lillehaug J.R."/>
            <person name="Eisen J.A."/>
        </authorList>
    </citation>
    <scope>NUCLEOTIDE SEQUENCE [LARGE SCALE GENOMIC DNA]</scope>
    <source>
        <strain>ATCC 33009 / NCIMB 11132 / Bath</strain>
    </source>
</reference>
<name>PQQD_METCA</name>
<comment type="function">
    <text evidence="1">Functions as a PqqA binding protein and presents PqqA to PqqE, in the pyrroloquinoline quinone (PQQ) biosynthetic pathway.</text>
</comment>
<comment type="pathway">
    <text evidence="1">Cofactor biosynthesis; pyrroloquinoline quinone biosynthesis.</text>
</comment>
<comment type="subunit">
    <text evidence="1">Monomer. Interacts with PqqE.</text>
</comment>
<comment type="similarity">
    <text evidence="1">Belongs to the PqqD family.</text>
</comment>
<evidence type="ECO:0000255" key="1">
    <source>
        <dbReference type="HAMAP-Rule" id="MF_00655"/>
    </source>
</evidence>
<gene>
    <name evidence="1" type="primary">pqqD</name>
    <name type="ordered locus">MCA1448</name>
</gene>
<keyword id="KW-0884">PQQ biosynthesis</keyword>
<keyword id="KW-1185">Reference proteome</keyword>
<protein>
    <recommendedName>
        <fullName evidence="1">PqqA binding protein</fullName>
    </recommendedName>
    <alternativeName>
        <fullName evidence="1">Coenzyme PQQ synthesis protein D</fullName>
    </alternativeName>
    <alternativeName>
        <fullName evidence="1">Pyrroloquinoline quinone biosynthesis protein D</fullName>
    </alternativeName>
</protein>
<dbReference type="EMBL" id="AE017282">
    <property type="protein sequence ID" value="AAU92559.1"/>
    <property type="molecule type" value="Genomic_DNA"/>
</dbReference>
<dbReference type="RefSeq" id="WP_010960725.1">
    <property type="nucleotide sequence ID" value="NC_002977.6"/>
</dbReference>
<dbReference type="SMR" id="Q608P1"/>
<dbReference type="STRING" id="243233.MCA1448"/>
<dbReference type="GeneID" id="88223721"/>
<dbReference type="KEGG" id="mca:MCA1448"/>
<dbReference type="eggNOG" id="ENOG5032Z81">
    <property type="taxonomic scope" value="Bacteria"/>
</dbReference>
<dbReference type="HOGENOM" id="CLU_163864_2_1_6"/>
<dbReference type="UniPathway" id="UPA00539"/>
<dbReference type="Proteomes" id="UP000006821">
    <property type="component" value="Chromosome"/>
</dbReference>
<dbReference type="GO" id="GO:0048038">
    <property type="term" value="F:quinone binding"/>
    <property type="evidence" value="ECO:0007669"/>
    <property type="project" value="InterPro"/>
</dbReference>
<dbReference type="GO" id="GO:0018189">
    <property type="term" value="P:pyrroloquinoline quinone biosynthetic process"/>
    <property type="evidence" value="ECO:0007669"/>
    <property type="project" value="UniProtKB-UniRule"/>
</dbReference>
<dbReference type="Gene3D" id="1.10.10.1150">
    <property type="entry name" value="Coenzyme PQQ synthesis protein D (PqqD)"/>
    <property type="match status" value="1"/>
</dbReference>
<dbReference type="HAMAP" id="MF_00655">
    <property type="entry name" value="PQQ_syn_PqqD"/>
    <property type="match status" value="1"/>
</dbReference>
<dbReference type="InterPro" id="IPR008792">
    <property type="entry name" value="PQQD"/>
</dbReference>
<dbReference type="InterPro" id="IPR022479">
    <property type="entry name" value="PqqD_bac"/>
</dbReference>
<dbReference type="InterPro" id="IPR041881">
    <property type="entry name" value="PqqD_sf"/>
</dbReference>
<dbReference type="NCBIfam" id="TIGR03859">
    <property type="entry name" value="PQQ_PqqD"/>
    <property type="match status" value="1"/>
</dbReference>
<dbReference type="NCBIfam" id="NF002535">
    <property type="entry name" value="PRK02079.1"/>
    <property type="match status" value="1"/>
</dbReference>
<dbReference type="Pfam" id="PF05402">
    <property type="entry name" value="PqqD"/>
    <property type="match status" value="1"/>
</dbReference>
<accession>Q608P1</accession>
<sequence length="93" mass="10707">MSLQPDTLLELSPLLRMQWEEAQQRYVILYPEGMIELNETAAAILELCDGQHNLTSIVDKLERKYDASGIEPDVREMLESALNNGWIREIIAY</sequence>
<organism>
    <name type="scientific">Methylococcus capsulatus (strain ATCC 33009 / NCIMB 11132 / Bath)</name>
    <dbReference type="NCBI Taxonomy" id="243233"/>
    <lineage>
        <taxon>Bacteria</taxon>
        <taxon>Pseudomonadati</taxon>
        <taxon>Pseudomonadota</taxon>
        <taxon>Gammaproteobacteria</taxon>
        <taxon>Methylococcales</taxon>
        <taxon>Methylococcaceae</taxon>
        <taxon>Methylococcus</taxon>
    </lineage>
</organism>